<sequence length="1943" mass="214116">MEENESQKCEPCLPYSADRRQMQEQGKGNLHVTSPEDAECRRTKERLSNGNSRGSVSKSSRNIPRRHTLGGPRSSKEILGMQTSEMDRKREAFLEHLKQKYPHHASAIMGHQERLRDQTRSPKLSHSPQPPSLGDPVEHLSETSADSLEAMSEGDAPTPFSRGSRTRASLPVVRSTNQTKERSLGVLYLQYGDETKQLRMPNEITSADTIRALFVSAFPQQLTMKMLESPSVAIYIKDESRNVYYELNDVRNIQDRSLLKVYNKDPAHAFNHTPKTMNGDMRMQRELVYARGDGPGAPRPGSTAHPPHAIPNSPPSTPVPHSMPPSPSRIPYGGTRSMVVPGNATIPRDRISSLPVSRPISPSPSAILERRDVKPDEDMSGKNIAMYRNEGFYADPYLYHEGRMSIASSHGGHPLDVPDHIIAYHRTAIRSASAYCNPSMQAEMHMEQSLYRQKSRKYPDSHLPTLGSKTPPASPHRVSDLRMIDMHAHYNAHGPPHTMQPDRASPSRQAFKKEPGTLVYIEKPRSAAGLSSLVDLGPPLMEKQVFAYSTATIPKDRETRERMQAMEKQIASLTGLVQSALFKGPITSYSKDASSEKMMKTTANRNHTDSAGTPHVSGGKMLSALESTVPPSQPPPVGTSAIHMSLLEMRRSVAELRLQLQQMRQLQLQNQELLRAMMKKAELEISGKVMETMKRLEDPVQRQRVLVEQERQKYLHEEEKIVKKLCELEDFVEDLKKDSTAASRLVTLKDVEDGAFLLRQVGEAVATLKGEFPTLQNKMRAILRIEVEAVRFLKEEPHKLDSLLKRVRSMTDVLTMLRRHVTDGLLKGTDAAQAAQYMAMEKATAAEVLKSQEEAAHTSGQPFHSTGAPGDAKSEVVPLSGMMVRHAQSSPVVIQPSQHSVALLNPAQNLPHVASSPAVPQEATSTLQMSQAPQSPQIPMNGSAMQSLFIEEIHSVSAKNRAVSIEKAEKKWEEKRQNLDHYNGKEFEKLLEEAQANIMKSIPNLEMPPATGPLPRGDAPVDKVELSEDSPNSEQDLEKLGGKSPPPPPPPPRRSYLPGSGLTTTRSGDVVYTGRKENITAKASSEDAGPSPQTRATKYPAEEPASAWTPSPPPVTTSSSKDEEEEEEEGDKIMAELQAFQKCSFMDVNSNSHAEPSRADSHVKDTRSGATVPPKEKKNLEFFHEDVRKSDVEYENGPQMEFQKVTTGAVRPSDPPKWERGMENSISDASRTSEYKTEIIMKENSISNMSLLRDSRNYSQETVPKASFGFSGISPLEDEINKGSKISGLQYSIPDTENQTLNYGKTKEMEKQNTDKCHVSSHTRLTESSVHDFKTEDQEVITTDFGQVVLRPKEARHANVNPNEDGESSSSSPTEENAATDNIAFMITETTVQVLSSGEVHDIVSQKGEDIQTVNIDARKEMTPRQEGTDNEDPVVCLDKKPVIIIFDEPMDIRSAYKRLSTIFEECDEELERMMMEEKIEEEEEEENGDSVVQNNNTSQMSHKKVAPGNLRTGQQVETKSQPHSLATETRNPGGQEMNRTELNKFSHVDSPNSECKGEDATDDQFESPKKKFKFKFPKKQLAALTQAIRTGTKTGKKTLQVVVYEEEEEDGTLKQHKEAKRFEIARSQPEDTPENTVRRQEQPSIESTSPISRTDEIRKNTYRTLDSLEQTIKQLENTISEMSPKALVDTSCSSNRDSVASSSHIAQEASPRPLLVPDEGPTALEPPTSIPSASRKGSSGAPQTSRMPVPMSAKNRPGTLDKPGKQSKLQDPRQYRQANGSAKKSGGDFKPTSPSLPASKIPALSPSSGKSSSLPSSSGDSSNLPNPPATKPSIASNPLSPQTGPPAHSASLIPSVSNGSLKFQSLTHTGKGHHLSFSPQSQNGRAPPPLSFSSSPPSPASSVSLNQGAKGTRTIHTPSLTSYKAQNGSSSKATPSTAKETS</sequence>
<name>SKT_HUMAN</name>
<organism>
    <name type="scientific">Homo sapiens</name>
    <name type="common">Human</name>
    <dbReference type="NCBI Taxonomy" id="9606"/>
    <lineage>
        <taxon>Eukaryota</taxon>
        <taxon>Metazoa</taxon>
        <taxon>Chordata</taxon>
        <taxon>Craniata</taxon>
        <taxon>Vertebrata</taxon>
        <taxon>Euteleostomi</taxon>
        <taxon>Mammalia</taxon>
        <taxon>Eutheria</taxon>
        <taxon>Euarchontoglires</taxon>
        <taxon>Primates</taxon>
        <taxon>Haplorrhini</taxon>
        <taxon>Catarrhini</taxon>
        <taxon>Hominidae</taxon>
        <taxon>Homo</taxon>
    </lineage>
</organism>
<evidence type="ECO:0000250" key="1">
    <source>
        <dbReference type="UniProtKB" id="A2AQ25"/>
    </source>
</evidence>
<evidence type="ECO:0000255" key="2"/>
<evidence type="ECO:0000256" key="3">
    <source>
        <dbReference type="SAM" id="MobiDB-lite"/>
    </source>
</evidence>
<evidence type="ECO:0000269" key="4">
    <source>
    </source>
</evidence>
<evidence type="ECO:0000269" key="5">
    <source>
    </source>
</evidence>
<evidence type="ECO:0000269" key="6">
    <source>
    </source>
</evidence>
<evidence type="ECO:0000269" key="7">
    <source>
    </source>
</evidence>
<evidence type="ECO:0000303" key="8">
    <source>
    </source>
</evidence>
<evidence type="ECO:0000303" key="9">
    <source>
    </source>
</evidence>
<evidence type="ECO:0000303" key="10">
    <source>
    </source>
</evidence>
<evidence type="ECO:0000303" key="11">
    <source>
    </source>
</evidence>
<evidence type="ECO:0000303" key="12">
    <source ref="7"/>
</evidence>
<evidence type="ECO:0000305" key="13"/>
<evidence type="ECO:0000312" key="14">
    <source>
        <dbReference type="EMBL" id="AAH18764.1"/>
    </source>
</evidence>
<evidence type="ECO:0000312" key="15">
    <source>
        <dbReference type="EMBL" id="AAH98577.1"/>
    </source>
</evidence>
<evidence type="ECO:0000312" key="16">
    <source>
        <dbReference type="EMBL" id="BAA86531.2"/>
    </source>
</evidence>
<evidence type="ECO:0000312" key="17">
    <source>
        <dbReference type="EMBL" id="BAC86241.1"/>
    </source>
</evidence>
<evidence type="ECO:0000312" key="18">
    <source>
        <dbReference type="EMBL" id="CAB75668.1"/>
    </source>
</evidence>
<evidence type="ECO:0007744" key="19">
    <source>
    </source>
</evidence>
<evidence type="ECO:0007744" key="20">
    <source>
    </source>
</evidence>
<evidence type="ECO:0007744" key="21">
    <source>
    </source>
</evidence>
<dbReference type="EMBL" id="AB033043">
    <property type="protein sequence ID" value="BAA86531.2"/>
    <property type="molecule type" value="mRNA"/>
</dbReference>
<dbReference type="EMBL" id="AL157473">
    <property type="protein sequence ID" value="CAB75668.1"/>
    <property type="molecule type" value="mRNA"/>
</dbReference>
<dbReference type="EMBL" id="AL833280">
    <property type="status" value="NOT_ANNOTATED_CDS"/>
    <property type="molecule type" value="mRNA"/>
</dbReference>
<dbReference type="EMBL" id="BX640796">
    <property type="protein sequence ID" value="CAE45879.1"/>
    <property type="status" value="ALT_SEQ"/>
    <property type="molecule type" value="mRNA"/>
</dbReference>
<dbReference type="EMBL" id="BX648451">
    <property type="status" value="NOT_ANNOTATED_CDS"/>
    <property type="molecule type" value="mRNA"/>
</dbReference>
<dbReference type="EMBL" id="AC063961">
    <property type="status" value="NOT_ANNOTATED_CDS"/>
    <property type="molecule type" value="Genomic_DNA"/>
</dbReference>
<dbReference type="EMBL" id="AL353583">
    <property type="status" value="NOT_ANNOTATED_CDS"/>
    <property type="molecule type" value="Genomic_DNA"/>
</dbReference>
<dbReference type="EMBL" id="AL356113">
    <property type="status" value="NOT_ANNOTATED_CDS"/>
    <property type="molecule type" value="Genomic_DNA"/>
</dbReference>
<dbReference type="EMBL" id="AL392104">
    <property type="status" value="NOT_ANNOTATED_CDS"/>
    <property type="molecule type" value="Genomic_DNA"/>
</dbReference>
<dbReference type="EMBL" id="AL157781">
    <property type="status" value="NOT_ANNOTATED_CDS"/>
    <property type="molecule type" value="Genomic_DNA"/>
</dbReference>
<dbReference type="EMBL" id="AL353650">
    <property type="status" value="NOT_ANNOTATED_CDS"/>
    <property type="molecule type" value="Genomic_DNA"/>
</dbReference>
<dbReference type="EMBL" id="AL355977">
    <property type="status" value="NOT_ANNOTATED_CDS"/>
    <property type="molecule type" value="Genomic_DNA"/>
</dbReference>
<dbReference type="EMBL" id="AL356477">
    <property type="status" value="NOT_ANNOTATED_CDS"/>
    <property type="molecule type" value="Genomic_DNA"/>
</dbReference>
<dbReference type="EMBL" id="AL391499">
    <property type="status" value="NOT_ANNOTATED_CDS"/>
    <property type="molecule type" value="Genomic_DNA"/>
</dbReference>
<dbReference type="EMBL" id="CH471072">
    <property type="protein sequence ID" value="EAW86124.1"/>
    <property type="molecule type" value="Genomic_DNA"/>
</dbReference>
<dbReference type="EMBL" id="BC018764">
    <property type="protein sequence ID" value="AAH18764.1"/>
    <property type="status" value="ALT_INIT"/>
    <property type="molecule type" value="mRNA"/>
</dbReference>
<dbReference type="EMBL" id="BC098577">
    <property type="protein sequence ID" value="AAH98577.1"/>
    <property type="molecule type" value="mRNA"/>
</dbReference>
<dbReference type="EMBL" id="BC136521">
    <property type="protein sequence ID" value="AAI36522.1"/>
    <property type="molecule type" value="mRNA"/>
</dbReference>
<dbReference type="EMBL" id="AB291616">
    <property type="protein sequence ID" value="BAF63529.1"/>
    <property type="status" value="ALT_INIT"/>
    <property type="molecule type" value="mRNA"/>
</dbReference>
<dbReference type="EMBL" id="AK125675">
    <property type="protein sequence ID" value="BAC86241.1"/>
    <property type="status" value="ALT_INIT"/>
    <property type="molecule type" value="mRNA"/>
</dbReference>
<dbReference type="CCDS" id="CCDS31165.1">
    <molecule id="Q5T5P2-1"/>
</dbReference>
<dbReference type="CCDS" id="CCDS41496.1">
    <molecule id="Q5T5P2-9"/>
</dbReference>
<dbReference type="CCDS" id="CCDS60501.1">
    <molecule id="Q5T5P2-7"/>
</dbReference>
<dbReference type="CCDS" id="CCDS60502.1">
    <molecule id="Q5T5P2-10"/>
</dbReference>
<dbReference type="CCDS" id="CCDS60504.1">
    <molecule id="Q5T5P2-6"/>
</dbReference>
<dbReference type="CCDS" id="CCDS60505.1">
    <molecule id="Q5T5P2-4"/>
</dbReference>
<dbReference type="PIR" id="T46910">
    <property type="entry name" value="T46910"/>
</dbReference>
<dbReference type="RefSeq" id="NP_001091970.1">
    <molecule id="Q5T5P2-9"/>
    <property type="nucleotide sequence ID" value="NM_001098500.3"/>
</dbReference>
<dbReference type="RefSeq" id="NP_001269696.1">
    <molecule id="Q5T5P2-10"/>
    <property type="nucleotide sequence ID" value="NM_001282767.2"/>
</dbReference>
<dbReference type="RefSeq" id="NP_001269697.1">
    <molecule id="Q5T5P2-7"/>
    <property type="nucleotide sequence ID" value="NM_001282768.2"/>
</dbReference>
<dbReference type="RefSeq" id="NP_001269698.1">
    <molecule id="Q5T5P2-6"/>
    <property type="nucleotide sequence ID" value="NM_001282769.2"/>
</dbReference>
<dbReference type="RefSeq" id="NP_001269699.1">
    <molecule id="Q5T5P2-4"/>
    <property type="nucleotide sequence ID" value="NM_001282770.2"/>
</dbReference>
<dbReference type="RefSeq" id="NP_062536.2">
    <molecule id="Q5T5P2-1"/>
    <property type="nucleotide sequence ID" value="NM_019590.4"/>
</dbReference>
<dbReference type="RefSeq" id="XP_005252573.1">
    <property type="nucleotide sequence ID" value="XM_005252516.3"/>
</dbReference>
<dbReference type="RefSeq" id="XP_016871918.1">
    <property type="nucleotide sequence ID" value="XM_017016429.1"/>
</dbReference>
<dbReference type="RefSeq" id="XP_047281472.1">
    <molecule id="Q5T5P2-2"/>
    <property type="nucleotide sequence ID" value="XM_047425516.1"/>
</dbReference>
<dbReference type="SMR" id="Q5T5P2"/>
<dbReference type="BioGRID" id="121111">
    <property type="interactions" value="100"/>
</dbReference>
<dbReference type="FunCoup" id="Q5T5P2">
    <property type="interactions" value="1013"/>
</dbReference>
<dbReference type="IntAct" id="Q5T5P2">
    <property type="interactions" value="46"/>
</dbReference>
<dbReference type="MINT" id="Q5T5P2"/>
<dbReference type="STRING" id="9606.ENSP00000365637"/>
<dbReference type="GlyCosmos" id="Q5T5P2">
    <property type="glycosylation" value="2 sites, 1 glycan"/>
</dbReference>
<dbReference type="GlyGen" id="Q5T5P2">
    <property type="glycosylation" value="6 sites, 1 O-linked glycan (5 sites)"/>
</dbReference>
<dbReference type="iPTMnet" id="Q5T5P2"/>
<dbReference type="PhosphoSitePlus" id="Q5T5P2"/>
<dbReference type="SwissPalm" id="Q5T5P2"/>
<dbReference type="BioMuta" id="KIAA1217"/>
<dbReference type="DMDM" id="147733121"/>
<dbReference type="jPOST" id="Q5T5P2"/>
<dbReference type="MassIVE" id="Q5T5P2"/>
<dbReference type="PaxDb" id="9606-ENSP00000365637"/>
<dbReference type="PeptideAtlas" id="Q5T5P2"/>
<dbReference type="ProteomicsDB" id="1472"/>
<dbReference type="ProteomicsDB" id="64537">
    <molecule id="Q5T5P2-1"/>
</dbReference>
<dbReference type="ProteomicsDB" id="64538">
    <molecule id="Q5T5P2-2"/>
</dbReference>
<dbReference type="ProteomicsDB" id="64539">
    <molecule id="Q5T5P2-3"/>
</dbReference>
<dbReference type="ProteomicsDB" id="64540">
    <molecule id="Q5T5P2-4"/>
</dbReference>
<dbReference type="ProteomicsDB" id="64541">
    <molecule id="Q5T5P2-6"/>
</dbReference>
<dbReference type="ProteomicsDB" id="64542">
    <molecule id="Q5T5P2-7"/>
</dbReference>
<dbReference type="ProteomicsDB" id="64543">
    <molecule id="Q5T5P2-8"/>
</dbReference>
<dbReference type="Pumba" id="Q5T5P2"/>
<dbReference type="Antibodypedia" id="1578">
    <property type="antibodies" value="27 antibodies from 14 providers"/>
</dbReference>
<dbReference type="DNASU" id="56243"/>
<dbReference type="Ensembl" id="ENST00000307544.10">
    <molecule id="Q5T5P2-6"/>
    <property type="protein sequence ID" value="ENSP00000302343.6"/>
    <property type="gene ID" value="ENSG00000120549.19"/>
</dbReference>
<dbReference type="Ensembl" id="ENST00000376451.4">
    <molecule id="Q5T5P2-3"/>
    <property type="protein sequence ID" value="ENSP00000365634.2"/>
    <property type="gene ID" value="ENSG00000120549.19"/>
</dbReference>
<dbReference type="Ensembl" id="ENST00000376452.7">
    <molecule id="Q5T5P2-10"/>
    <property type="protein sequence ID" value="ENSP00000365635.3"/>
    <property type="gene ID" value="ENSG00000120549.19"/>
</dbReference>
<dbReference type="Ensembl" id="ENST00000376454.8">
    <molecule id="Q5T5P2-1"/>
    <property type="protein sequence ID" value="ENSP00000365637.3"/>
    <property type="gene ID" value="ENSG00000120549.19"/>
</dbReference>
<dbReference type="Ensembl" id="ENST00000376462.5">
    <molecule id="Q5T5P2-9"/>
    <property type="protein sequence ID" value="ENSP00000365645.1"/>
    <property type="gene ID" value="ENSG00000120549.19"/>
</dbReference>
<dbReference type="Ensembl" id="ENST00000396445.5">
    <molecule id="Q5T5P2-8"/>
    <property type="protein sequence ID" value="ENSP00000379722.1"/>
    <property type="gene ID" value="ENSG00000120549.19"/>
</dbReference>
<dbReference type="Ensembl" id="ENST00000396446.5">
    <molecule id="Q5T5P2-4"/>
    <property type="protein sequence ID" value="ENSP00000379723.1"/>
    <property type="gene ID" value="ENSG00000120549.19"/>
</dbReference>
<dbReference type="Ensembl" id="ENST00000430453.6">
    <molecule id="Q5T5P2-9"/>
    <property type="protein sequence ID" value="ENSP00000389680.3"/>
    <property type="gene ID" value="ENSG00000120549.19"/>
</dbReference>
<dbReference type="Ensembl" id="ENST00000458595.5">
    <molecule id="Q5T5P2-7"/>
    <property type="protein sequence ID" value="ENSP00000392625.1"/>
    <property type="gene ID" value="ENSG00000120549.19"/>
</dbReference>
<dbReference type="GeneID" id="56243"/>
<dbReference type="KEGG" id="hsa:56243"/>
<dbReference type="MANE-Select" id="ENST00000376454.8">
    <property type="protein sequence ID" value="ENSP00000365637.3"/>
    <property type="RefSeq nucleotide sequence ID" value="NM_019590.5"/>
    <property type="RefSeq protein sequence ID" value="NP_062536.2"/>
</dbReference>
<dbReference type="UCSC" id="uc001irs.5">
    <molecule id="Q5T5P2-1"/>
    <property type="organism name" value="human"/>
</dbReference>
<dbReference type="AGR" id="HGNC:25428"/>
<dbReference type="CTD" id="56243"/>
<dbReference type="DisGeNET" id="56243"/>
<dbReference type="GeneCards" id="KIAA1217"/>
<dbReference type="HGNC" id="HGNC:25428">
    <property type="gene designation" value="KIAA1217"/>
</dbReference>
<dbReference type="HPA" id="ENSG00000120549">
    <property type="expression patterns" value="Tissue enhanced (skeletal)"/>
</dbReference>
<dbReference type="MIM" id="617367">
    <property type="type" value="gene"/>
</dbReference>
<dbReference type="neXtProt" id="NX_Q5T5P2"/>
<dbReference type="OpenTargets" id="ENSG00000120549"/>
<dbReference type="PharmGKB" id="PA134893343"/>
<dbReference type="VEuPathDB" id="HostDB:ENSG00000120549"/>
<dbReference type="eggNOG" id="ENOG502QQCT">
    <property type="taxonomic scope" value="Eukaryota"/>
</dbReference>
<dbReference type="GeneTree" id="ENSGT00940000156098"/>
<dbReference type="HOGENOM" id="CLU_002507_2_1_1"/>
<dbReference type="InParanoid" id="Q5T5P2"/>
<dbReference type="OMA" id="XKAERKW"/>
<dbReference type="OrthoDB" id="6022652at2759"/>
<dbReference type="PAN-GO" id="Q5T5P2">
    <property type="GO annotations" value="1 GO annotation based on evolutionary models"/>
</dbReference>
<dbReference type="PhylomeDB" id="Q5T5P2"/>
<dbReference type="TreeFam" id="TF332255"/>
<dbReference type="PathwayCommons" id="Q5T5P2"/>
<dbReference type="SignaLink" id="Q5T5P2"/>
<dbReference type="BioGRID-ORCS" id="56243">
    <property type="hits" value="18 hits in 1149 CRISPR screens"/>
</dbReference>
<dbReference type="CD-CODE" id="FB4E32DD">
    <property type="entry name" value="Presynaptic clusters and postsynaptic densities"/>
</dbReference>
<dbReference type="ChiTaRS" id="KIAA1217">
    <property type="organism name" value="human"/>
</dbReference>
<dbReference type="GenomeRNAi" id="56243"/>
<dbReference type="Pharos" id="Q5T5P2">
    <property type="development level" value="Tbio"/>
</dbReference>
<dbReference type="PRO" id="PR:Q5T5P2"/>
<dbReference type="Proteomes" id="UP000005640">
    <property type="component" value="Chromosome 10"/>
</dbReference>
<dbReference type="RNAct" id="Q5T5P2">
    <property type="molecule type" value="protein"/>
</dbReference>
<dbReference type="Bgee" id="ENSG00000120549">
    <property type="expression patterns" value="Expressed in epithelial cell of pancreas and 188 other cell types or tissues"/>
</dbReference>
<dbReference type="ExpressionAtlas" id="Q5T5P2">
    <property type="expression patterns" value="baseline and differential"/>
</dbReference>
<dbReference type="GO" id="GO:0005813">
    <property type="term" value="C:centrosome"/>
    <property type="evidence" value="ECO:0000314"/>
    <property type="project" value="UniProtKB"/>
</dbReference>
<dbReference type="GO" id="GO:0005737">
    <property type="term" value="C:cytoplasm"/>
    <property type="evidence" value="ECO:0000250"/>
    <property type="project" value="UniProtKB"/>
</dbReference>
<dbReference type="GO" id="GO:0048706">
    <property type="term" value="P:embryonic skeletal system development"/>
    <property type="evidence" value="ECO:0000250"/>
    <property type="project" value="UniProtKB"/>
</dbReference>
<dbReference type="FunFam" id="1.20.58.1540:FF:000001">
    <property type="entry name" value="SRC kinase signaling inhibitor 1"/>
    <property type="match status" value="1"/>
</dbReference>
<dbReference type="Gene3D" id="1.20.58.1540">
    <property type="entry name" value="Actin interacting protein 3, C-terminal domain"/>
    <property type="match status" value="1"/>
</dbReference>
<dbReference type="InterPro" id="IPR022782">
    <property type="entry name" value="AIP3-like_C"/>
</dbReference>
<dbReference type="InterPro" id="IPR051825">
    <property type="entry name" value="SRCIN1"/>
</dbReference>
<dbReference type="PANTHER" id="PTHR22741">
    <property type="entry name" value="P140CAP/SNIP-RELATED"/>
    <property type="match status" value="1"/>
</dbReference>
<dbReference type="PANTHER" id="PTHR22741:SF11">
    <property type="entry name" value="SICKLE TAIL PROTEIN HOMOLOG"/>
    <property type="match status" value="1"/>
</dbReference>
<dbReference type="Pfam" id="PF03915">
    <property type="entry name" value="AIP3"/>
    <property type="match status" value="1"/>
</dbReference>
<keyword id="KW-0025">Alternative splicing</keyword>
<keyword id="KW-0175">Coiled coil</keyword>
<keyword id="KW-0963">Cytoplasm</keyword>
<keyword id="KW-0206">Cytoskeleton</keyword>
<keyword id="KW-0217">Developmental protein</keyword>
<keyword id="KW-0325">Glycoprotein</keyword>
<keyword id="KW-0597">Phosphoprotein</keyword>
<keyword id="KW-1267">Proteomics identification</keyword>
<keyword id="KW-1185">Reference proteome</keyword>
<feature type="chain" id="PRO_0000287897" description="Sickle tail protein homolog">
    <location>
        <begin position="1"/>
        <end position="1943"/>
    </location>
</feature>
<feature type="region of interest" description="Disordered" evidence="3">
    <location>
        <begin position="1"/>
        <end position="79"/>
    </location>
</feature>
<feature type="region of interest" description="Disordered" evidence="3">
    <location>
        <begin position="112"/>
        <end position="177"/>
    </location>
</feature>
<feature type="region of interest" description="Disordered" evidence="3">
    <location>
        <begin position="290"/>
        <end position="331"/>
    </location>
</feature>
<feature type="region of interest" description="Disordered" evidence="3">
    <location>
        <begin position="456"/>
        <end position="476"/>
    </location>
</feature>
<feature type="region of interest" description="Disordered" evidence="3">
    <location>
        <begin position="848"/>
        <end position="874"/>
    </location>
</feature>
<feature type="region of interest" description="Disordered" evidence="3">
    <location>
        <begin position="1003"/>
        <end position="1230"/>
    </location>
</feature>
<feature type="region of interest" description="Disordered" evidence="3">
    <location>
        <begin position="1305"/>
        <end position="1329"/>
    </location>
</feature>
<feature type="region of interest" description="Disordered" evidence="3">
    <location>
        <begin position="1352"/>
        <end position="1377"/>
    </location>
</feature>
<feature type="region of interest" description="Disordered" evidence="3">
    <location>
        <begin position="1481"/>
        <end position="1572"/>
    </location>
</feature>
<feature type="region of interest" description="Disordered" evidence="3">
    <location>
        <begin position="1606"/>
        <end position="1660"/>
    </location>
</feature>
<feature type="region of interest" description="Disordered" evidence="3">
    <location>
        <begin position="1677"/>
        <end position="1943"/>
    </location>
</feature>
<feature type="coiled-coil region" evidence="2">
    <location>
        <begin position="557"/>
        <end position="581"/>
    </location>
</feature>
<feature type="coiled-coil region" evidence="2">
    <location>
        <begin position="644"/>
        <end position="685"/>
    </location>
</feature>
<feature type="coiled-coil region" evidence="2">
    <location>
        <begin position="957"/>
        <end position="985"/>
    </location>
</feature>
<feature type="coiled-coil region" evidence="2">
    <location>
        <begin position="1464"/>
        <end position="1490"/>
    </location>
</feature>
<feature type="coiled-coil region" evidence="2">
    <location>
        <begin position="1656"/>
        <end position="1686"/>
    </location>
</feature>
<feature type="compositionally biased region" description="Basic and acidic residues" evidence="3">
    <location>
        <begin position="38"/>
        <end position="47"/>
    </location>
</feature>
<feature type="compositionally biased region" description="Polar residues" evidence="3">
    <location>
        <begin position="48"/>
        <end position="62"/>
    </location>
</feature>
<feature type="compositionally biased region" description="Pro residues" evidence="3">
    <location>
        <begin position="308"/>
        <end position="328"/>
    </location>
</feature>
<feature type="compositionally biased region" description="Pro residues" evidence="3">
    <location>
        <begin position="1044"/>
        <end position="1053"/>
    </location>
</feature>
<feature type="compositionally biased region" description="Basic and acidic residues" evidence="3">
    <location>
        <begin position="1155"/>
        <end position="1167"/>
    </location>
</feature>
<feature type="compositionally biased region" description="Basic and acidic residues" evidence="3">
    <location>
        <begin position="1174"/>
        <end position="1192"/>
    </location>
</feature>
<feature type="compositionally biased region" description="Basic and acidic residues" evidence="3">
    <location>
        <begin position="1305"/>
        <end position="1318"/>
    </location>
</feature>
<feature type="compositionally biased region" description="Polar residues" evidence="3">
    <location>
        <begin position="1368"/>
        <end position="1377"/>
    </location>
</feature>
<feature type="compositionally biased region" description="Polar residues" evidence="3">
    <location>
        <begin position="1491"/>
        <end position="1501"/>
    </location>
</feature>
<feature type="compositionally biased region" description="Polar residues" evidence="3">
    <location>
        <begin position="1512"/>
        <end position="1533"/>
    </location>
</feature>
<feature type="compositionally biased region" description="Basic and acidic residues" evidence="3">
    <location>
        <begin position="1539"/>
        <end position="1548"/>
    </location>
</feature>
<feature type="compositionally biased region" description="Basic and acidic residues" evidence="3">
    <location>
        <begin position="1612"/>
        <end position="1625"/>
    </location>
</feature>
<feature type="compositionally biased region" description="Polar residues" evidence="3">
    <location>
        <begin position="1643"/>
        <end position="1653"/>
    </location>
</feature>
<feature type="compositionally biased region" description="Polar residues" evidence="3">
    <location>
        <begin position="1691"/>
        <end position="1706"/>
    </location>
</feature>
<feature type="compositionally biased region" description="Polar residues" evidence="3">
    <location>
        <begin position="1731"/>
        <end position="1747"/>
    </location>
</feature>
<feature type="compositionally biased region" description="Basic and acidic residues" evidence="3">
    <location>
        <begin position="1763"/>
        <end position="1775"/>
    </location>
</feature>
<feature type="compositionally biased region" description="Low complexity" evidence="3">
    <location>
        <begin position="1806"/>
        <end position="1825"/>
    </location>
</feature>
<feature type="compositionally biased region" description="Polar residues" evidence="3">
    <location>
        <begin position="1834"/>
        <end position="1843"/>
    </location>
</feature>
<feature type="compositionally biased region" description="Polar residues" evidence="3">
    <location>
        <begin position="1853"/>
        <end position="1869"/>
    </location>
</feature>
<feature type="compositionally biased region" description="Low complexity" evidence="3">
    <location>
        <begin position="1892"/>
        <end position="1905"/>
    </location>
</feature>
<feature type="compositionally biased region" description="Polar residues" evidence="3">
    <location>
        <begin position="1906"/>
        <end position="1943"/>
    </location>
</feature>
<feature type="modified residue" description="Phosphoserine" evidence="1">
    <location>
        <position position="169"/>
    </location>
</feature>
<feature type="modified residue" description="Phosphotyrosine" evidence="1">
    <location>
        <position position="244"/>
    </location>
</feature>
<feature type="modified residue" description="Phosphoserine" evidence="20">
    <location>
        <position position="361"/>
    </location>
</feature>
<feature type="modified residue" description="Phosphoserine" evidence="1">
    <location>
        <position position="365"/>
    </location>
</feature>
<feature type="modified residue" description="Phosphotyrosine" evidence="19">
    <location>
        <position position="393"/>
    </location>
</feature>
<feature type="modified residue" description="Phosphothreonine" evidence="21">
    <location>
        <position position="470"/>
    </location>
</feature>
<feature type="modified residue" description="Phosphoserine" evidence="1">
    <location>
        <position position="474"/>
    </location>
</feature>
<feature type="modified residue" description="Phosphoserine" evidence="21">
    <location>
        <position position="526"/>
    </location>
</feature>
<feature type="modified residue" description="Phosphoserine" evidence="1">
    <location>
        <position position="809"/>
    </location>
</feature>
<feature type="modified residue" description="Phosphoserine" evidence="1">
    <location>
        <position position="1027"/>
    </location>
</feature>
<feature type="modified residue" description="Phosphoserine" evidence="1">
    <location>
        <position position="1030"/>
    </location>
</feature>
<feature type="modified residue" description="Phosphoserine" evidence="1">
    <location>
        <position position="1033"/>
    </location>
</feature>
<feature type="modified residue" description="Phosphoserine" evidence="21">
    <location>
        <position position="1044"/>
    </location>
</feature>
<feature type="modified residue" description="Phosphoserine" evidence="1">
    <location>
        <position position="1461"/>
    </location>
</feature>
<feature type="modified residue" description="Phosphoserine" evidence="21">
    <location>
        <position position="1739"/>
    </location>
</feature>
<feature type="modified residue" description="Phosphoserine" evidence="1">
    <location>
        <position position="1841"/>
    </location>
</feature>
<feature type="modified residue" description="Phosphoserine" evidence="1">
    <location>
        <position position="1896"/>
    </location>
</feature>
<feature type="modified residue" description="Phosphoserine" evidence="1">
    <location>
        <position position="1899"/>
    </location>
</feature>
<feature type="modified residue" description="Phosphoserine" evidence="1">
    <location>
        <position position="1902"/>
    </location>
</feature>
<feature type="glycosylation site" description="O-linked (GlcNAc) serine" evidence="1">
    <location>
        <position position="357"/>
    </location>
</feature>
<feature type="splice variant" id="VSP_052427" description="In isoform 3, isoform 4, isoform 6 and isoform 7." evidence="9 10 11">
    <location>
        <begin position="1"/>
        <end position="282"/>
    </location>
</feature>
<feature type="splice variant" id="VSP_054107" description="In isoform 9." evidence="8">
    <location>
        <begin position="1"/>
        <end position="80"/>
    </location>
</feature>
<feature type="splice variant" id="VSP_052428" description="In isoform 3, isoform 4, isoform 5, isoform 6, isoform 7 and isoform 10." evidence="9 10 11 12">
    <location>
        <begin position="560"/>
        <end position="594"/>
    </location>
</feature>
<feature type="splice variant" id="VSP_054874" description="In isoform 10." evidence="10">
    <location>
        <position position="1028"/>
    </location>
</feature>
<feature type="splice variant" id="VSP_052429" description="In isoform 2, isoform 4 and isoform 9." evidence="8 10 11">
    <location>
        <begin position="1139"/>
        <end position="1737"/>
    </location>
</feature>
<feature type="splice variant" id="VSP_030353" description="In isoform 5 and isoform 7." evidence="11 12">
    <location>
        <begin position="1179"/>
        <end position="1737"/>
    </location>
</feature>
<feature type="splice variant" id="VSP_052430" description="In isoform 6 and isoform 10." evidence="10">
    <location>
        <begin position="1205"/>
        <end position="1737"/>
    </location>
</feature>
<feature type="splice variant" id="VSP_052431" description="In isoform 3, isoform 4, isoform 6 and isoform 7." evidence="9 10 11">
    <original>ANGS</original>
    <variation>VVLP</variation>
    <location>
        <begin position="1779"/>
        <end position="1782"/>
    </location>
</feature>
<feature type="splice variant" id="VSP_052432" description="In isoform 3, isoform 4, isoform 6 and isoform 7." evidence="9 10 11">
    <location>
        <begin position="1783"/>
        <end position="1943"/>
    </location>
</feature>
<feature type="sequence variant" id="VAR_051358" description="In dbSNP:rs17506606.">
    <original>A</original>
    <variation>G</variation>
    <location>
        <position position="145"/>
    </location>
</feature>
<feature type="sequence variant" id="VAR_051359" description="In dbSNP:rs10828663." evidence="5">
    <original>A</original>
    <variation>T</variation>
    <location>
        <position position="887"/>
    </location>
</feature>
<feature type="sequence variant" id="VAR_051360" description="In dbSNP:rs16924863.">
    <original>P</original>
    <variation>A</variation>
    <location>
        <position position="1362"/>
    </location>
</feature>
<feature type="sequence variant" id="VAR_085329" description="Found in a patient with Klippel-Feil syndrome; uncertain significance." evidence="7">
    <location>
        <begin position="1407"/>
        <end position="1943"/>
    </location>
</feature>
<feature type="sequence conflict" description="In Ref. 3; AL833280." evidence="13" ref="3">
    <original>T</original>
    <variation>A</variation>
    <location>
        <position position="498"/>
    </location>
</feature>
<feature type="sequence conflict" description="In Ref. 3; BX648451." evidence="13" ref="3">
    <original>R</original>
    <variation>H</variation>
    <location>
        <position position="508"/>
    </location>
</feature>
<feature type="sequence conflict" description="In Ref. 3; AL833280." evidence="13" ref="3">
    <original>K</original>
    <variation>R</variation>
    <location>
        <position position="679"/>
    </location>
</feature>
<feature type="sequence conflict" description="In Ref. 3; CAE45879." evidence="13" ref="3">
    <original>E</original>
    <variation>G</variation>
    <location>
        <position position="795"/>
    </location>
</feature>
<feature type="sequence conflict" description="In Ref. 3; BX648451." evidence="13" ref="3">
    <original>T</original>
    <variation>M</variation>
    <location>
        <position position="829"/>
    </location>
</feature>
<feature type="sequence conflict" description="In Ref. 3; BX648451." evidence="13" ref="3">
    <original>A</original>
    <variation>P</variation>
    <location>
        <position position="914"/>
    </location>
</feature>
<feature type="sequence conflict" description="In Ref. 8; BAC86241." evidence="13" ref="8">
    <original>S</original>
    <variation>N</variation>
    <location>
        <position position="1267"/>
    </location>
</feature>
<feature type="sequence conflict" description="In Ref. 3; AL833280." evidence="13" ref="3">
    <original>T</original>
    <variation>A</variation>
    <location>
        <position position="1306"/>
    </location>
</feature>
<feature type="sequence conflict" description="In Ref. 3; AL833280." evidence="13" ref="3">
    <original>P</original>
    <variation>L</variation>
    <location>
        <position position="1743"/>
    </location>
</feature>
<accession>Q5T5P2</accession>
<accession>A5LHW9</accession>
<accession>A6NLF3</accession>
<accession>A6PVQ5</accession>
<accession>A6PVQ6</accession>
<accession>A6PVQ7</accession>
<accession>B9EGK4</accession>
<accession>Q4KMG4</accession>
<accession>Q5T5P3</accession>
<accession>Q5T7H3</accession>
<accession>Q6MZZ6</accession>
<accession>Q6ZUI4</accession>
<accession>Q8WV45</accession>
<accession>Q9NSR2</accession>
<accession>Q9ULK3</accession>
<reference evidence="13 16" key="1">
    <citation type="journal article" date="1999" name="DNA Res.">
        <title>Prediction of the coding sequences of unidentified human genes. XV. The complete sequences of 100 new cDNA clones from brain which code for large proteins in vitro.</title>
        <authorList>
            <person name="Nagase T."/>
            <person name="Ishikawa K."/>
            <person name="Kikuno R."/>
            <person name="Hirosawa M."/>
            <person name="Nomura N."/>
            <person name="Ohara O."/>
        </authorList>
    </citation>
    <scope>NUCLEOTIDE SEQUENCE [LARGE SCALE MRNA] (ISOFORM 9)</scope>
    <source>
        <tissue evidence="16">Brain</tissue>
    </source>
</reference>
<reference key="2">
    <citation type="journal article" date="2002" name="DNA Res.">
        <title>Construction of expression-ready cDNA clones for KIAA genes: manual curation of 330 KIAA cDNA clones.</title>
        <authorList>
            <person name="Nakajima D."/>
            <person name="Okazaki N."/>
            <person name="Yamakawa H."/>
            <person name="Kikuno R."/>
            <person name="Ohara O."/>
            <person name="Nagase T."/>
        </authorList>
    </citation>
    <scope>SEQUENCE REVISION</scope>
</reference>
<reference key="3">
    <citation type="journal article" date="2007" name="BMC Genomics">
        <title>The full-ORF clone resource of the German cDNA consortium.</title>
        <authorList>
            <person name="Bechtel S."/>
            <person name="Rosenfelder H."/>
            <person name="Duda A."/>
            <person name="Schmidt C.P."/>
            <person name="Ernst U."/>
            <person name="Wellenreuther R."/>
            <person name="Mehrle A."/>
            <person name="Schuster C."/>
            <person name="Bahr A."/>
            <person name="Bloecker H."/>
            <person name="Heubner D."/>
            <person name="Hoerlein A."/>
            <person name="Michel G."/>
            <person name="Wedler H."/>
            <person name="Koehrer K."/>
            <person name="Ottenwaelder B."/>
            <person name="Poustka A."/>
            <person name="Wiemann S."/>
            <person name="Schupp I."/>
        </authorList>
    </citation>
    <scope>NUCLEOTIDE SEQUENCE [LARGE SCALE MRNA] (ISOFORMS 1; 3 AND 7)</scope>
    <scope>NUCLEOTIDE SEQUENCE [LARGE SCALE MRNA] OF 925-1943 (ISOFORM 2)</scope>
    <source>
        <tissue>Amygdala</tissue>
        <tissue>Carcinoma</tissue>
        <tissue>Endometrial adenocarcinoma</tissue>
        <tissue>Skeletal muscle</tissue>
    </source>
</reference>
<reference key="4">
    <citation type="journal article" date="2004" name="Nature">
        <title>The DNA sequence and comparative analysis of human chromosome 10.</title>
        <authorList>
            <person name="Deloukas P."/>
            <person name="Earthrowl M.E."/>
            <person name="Grafham D.V."/>
            <person name="Rubenfield M."/>
            <person name="French L."/>
            <person name="Steward C.A."/>
            <person name="Sims S.K."/>
            <person name="Jones M.C."/>
            <person name="Searle S."/>
            <person name="Scott C."/>
            <person name="Howe K."/>
            <person name="Hunt S.E."/>
            <person name="Andrews T.D."/>
            <person name="Gilbert J.G.R."/>
            <person name="Swarbreck D."/>
            <person name="Ashurst J.L."/>
            <person name="Taylor A."/>
            <person name="Battles J."/>
            <person name="Bird C.P."/>
            <person name="Ainscough R."/>
            <person name="Almeida J.P."/>
            <person name="Ashwell R.I.S."/>
            <person name="Ambrose K.D."/>
            <person name="Babbage A.K."/>
            <person name="Bagguley C.L."/>
            <person name="Bailey J."/>
            <person name="Banerjee R."/>
            <person name="Bates K."/>
            <person name="Beasley H."/>
            <person name="Bray-Allen S."/>
            <person name="Brown A.J."/>
            <person name="Brown J.Y."/>
            <person name="Burford D.C."/>
            <person name="Burrill W."/>
            <person name="Burton J."/>
            <person name="Cahill P."/>
            <person name="Camire D."/>
            <person name="Carter N.P."/>
            <person name="Chapman J.C."/>
            <person name="Clark S.Y."/>
            <person name="Clarke G."/>
            <person name="Clee C.M."/>
            <person name="Clegg S."/>
            <person name="Corby N."/>
            <person name="Coulson A."/>
            <person name="Dhami P."/>
            <person name="Dutta I."/>
            <person name="Dunn M."/>
            <person name="Faulkner L."/>
            <person name="Frankish A."/>
            <person name="Frankland J.A."/>
            <person name="Garner P."/>
            <person name="Garnett J."/>
            <person name="Gribble S."/>
            <person name="Griffiths C."/>
            <person name="Grocock R."/>
            <person name="Gustafson E."/>
            <person name="Hammond S."/>
            <person name="Harley J.L."/>
            <person name="Hart E."/>
            <person name="Heath P.D."/>
            <person name="Ho T.P."/>
            <person name="Hopkins B."/>
            <person name="Horne J."/>
            <person name="Howden P.J."/>
            <person name="Huckle E."/>
            <person name="Hynds C."/>
            <person name="Johnson C."/>
            <person name="Johnson D."/>
            <person name="Kana A."/>
            <person name="Kay M."/>
            <person name="Kimberley A.M."/>
            <person name="Kershaw J.K."/>
            <person name="Kokkinaki M."/>
            <person name="Laird G.K."/>
            <person name="Lawlor S."/>
            <person name="Lee H.M."/>
            <person name="Leongamornlert D.A."/>
            <person name="Laird G."/>
            <person name="Lloyd C."/>
            <person name="Lloyd D.M."/>
            <person name="Loveland J."/>
            <person name="Lovell J."/>
            <person name="McLaren S."/>
            <person name="McLay K.E."/>
            <person name="McMurray A."/>
            <person name="Mashreghi-Mohammadi M."/>
            <person name="Matthews L."/>
            <person name="Milne S."/>
            <person name="Nickerson T."/>
            <person name="Nguyen M."/>
            <person name="Overton-Larty E."/>
            <person name="Palmer S.A."/>
            <person name="Pearce A.V."/>
            <person name="Peck A.I."/>
            <person name="Pelan S."/>
            <person name="Phillimore B."/>
            <person name="Porter K."/>
            <person name="Rice C.M."/>
            <person name="Rogosin A."/>
            <person name="Ross M.T."/>
            <person name="Sarafidou T."/>
            <person name="Sehra H.K."/>
            <person name="Shownkeen R."/>
            <person name="Skuce C.D."/>
            <person name="Smith M."/>
            <person name="Standring L."/>
            <person name="Sycamore N."/>
            <person name="Tester J."/>
            <person name="Thorpe A."/>
            <person name="Torcasso W."/>
            <person name="Tracey A."/>
            <person name="Tromans A."/>
            <person name="Tsolas J."/>
            <person name="Wall M."/>
            <person name="Walsh J."/>
            <person name="Wang H."/>
            <person name="Weinstock K."/>
            <person name="West A.P."/>
            <person name="Willey D.L."/>
            <person name="Whitehead S.L."/>
            <person name="Wilming L."/>
            <person name="Wray P.W."/>
            <person name="Young L."/>
            <person name="Chen Y."/>
            <person name="Lovering R.C."/>
            <person name="Moschonas N.K."/>
            <person name="Siebert R."/>
            <person name="Fechtel K."/>
            <person name="Bentley D."/>
            <person name="Durbin R.M."/>
            <person name="Hubbard T."/>
            <person name="Doucette-Stamm L."/>
            <person name="Beck S."/>
            <person name="Smith D.R."/>
            <person name="Rogers J."/>
        </authorList>
    </citation>
    <scope>NUCLEOTIDE SEQUENCE [LARGE SCALE GENOMIC DNA]</scope>
</reference>
<reference evidence="13 18" key="5">
    <citation type="submission" date="2005-09" db="EMBL/GenBank/DDBJ databases">
        <authorList>
            <person name="Mural R.J."/>
            <person name="Istrail S."/>
            <person name="Sutton G.G."/>
            <person name="Florea L."/>
            <person name="Halpern A.L."/>
            <person name="Mobarry C.M."/>
            <person name="Lippert R."/>
            <person name="Walenz B."/>
            <person name="Shatkay H."/>
            <person name="Dew I."/>
            <person name="Miller J.R."/>
            <person name="Flanigan M.J."/>
            <person name="Edwards N.J."/>
            <person name="Bolanos R."/>
            <person name="Fasulo D."/>
            <person name="Halldorsson B.V."/>
            <person name="Hannenhalli S."/>
            <person name="Turner R."/>
            <person name="Yooseph S."/>
            <person name="Lu F."/>
            <person name="Nusskern D.R."/>
            <person name="Shue B.C."/>
            <person name="Zheng X.H."/>
            <person name="Zhong F."/>
            <person name="Delcher A.L."/>
            <person name="Huson D.H."/>
            <person name="Kravitz S.A."/>
            <person name="Mouchard L."/>
            <person name="Reinert K."/>
            <person name="Remington K.A."/>
            <person name="Clark A.G."/>
            <person name="Waterman M.S."/>
            <person name="Eichler E.E."/>
            <person name="Adams M.D."/>
            <person name="Hunkapiller M.W."/>
            <person name="Myers E.W."/>
            <person name="Venter J.C."/>
        </authorList>
    </citation>
    <scope>NUCLEOTIDE SEQUENCE [LARGE SCALE GENOMIC DNA]</scope>
</reference>
<reference evidence="13 15" key="6">
    <citation type="journal article" date="2004" name="Genome Res.">
        <title>The status, quality, and expansion of the NIH full-length cDNA project: the Mammalian Gene Collection (MGC).</title>
        <authorList>
            <consortium name="The MGC Project Team"/>
        </authorList>
    </citation>
    <scope>NUCLEOTIDE SEQUENCE [LARGE SCALE MRNA] (ISOFORMS 4; 6 AND 10)</scope>
    <scope>VARIANT THR-887</scope>
    <source>
        <tissue evidence="15">Chondrosarcoma</tissue>
        <tissue>Testis</tissue>
        <tissue evidence="14">Uterus</tissue>
    </source>
</reference>
<reference evidence="13 18" key="7">
    <citation type="submission" date="2007-01" db="EMBL/GenBank/DDBJ databases">
        <title>A human Sickle tail (SKT) expresses especially in notochordal cells.</title>
        <authorList>
            <person name="Semba K."/>
            <person name="Araki K."/>
            <person name="Araki M."/>
            <person name="Abe K."/>
            <person name="Yamamura K."/>
        </authorList>
    </citation>
    <scope>NUCLEOTIDE SEQUENCE [MRNA] OF 25-1943 (ISOFORM 5)</scope>
</reference>
<reference evidence="13 17" key="8">
    <citation type="journal article" date="2004" name="Nat. Genet.">
        <title>Complete sequencing and characterization of 21,243 full-length human cDNAs.</title>
        <authorList>
            <person name="Ota T."/>
            <person name="Suzuki Y."/>
            <person name="Nishikawa T."/>
            <person name="Otsuki T."/>
            <person name="Sugiyama T."/>
            <person name="Irie R."/>
            <person name="Wakamatsu A."/>
            <person name="Hayashi K."/>
            <person name="Sato H."/>
            <person name="Nagai K."/>
            <person name="Kimura K."/>
            <person name="Makita H."/>
            <person name="Sekine M."/>
            <person name="Obayashi M."/>
            <person name="Nishi T."/>
            <person name="Shibahara T."/>
            <person name="Tanaka T."/>
            <person name="Ishii S."/>
            <person name="Yamamoto J."/>
            <person name="Saito K."/>
            <person name="Kawai Y."/>
            <person name="Isono Y."/>
            <person name="Nakamura Y."/>
            <person name="Nagahari K."/>
            <person name="Murakami K."/>
            <person name="Yasuda T."/>
            <person name="Iwayanagi T."/>
            <person name="Wagatsuma M."/>
            <person name="Shiratori A."/>
            <person name="Sudo H."/>
            <person name="Hosoiri T."/>
            <person name="Kaku Y."/>
            <person name="Kodaira H."/>
            <person name="Kondo H."/>
            <person name="Sugawara M."/>
            <person name="Takahashi M."/>
            <person name="Kanda K."/>
            <person name="Yokoi T."/>
            <person name="Furuya T."/>
            <person name="Kikkawa E."/>
            <person name="Omura Y."/>
            <person name="Abe K."/>
            <person name="Kamihara K."/>
            <person name="Katsuta N."/>
            <person name="Sato K."/>
            <person name="Tanikawa M."/>
            <person name="Yamazaki M."/>
            <person name="Ninomiya K."/>
            <person name="Ishibashi T."/>
            <person name="Yamashita H."/>
            <person name="Murakawa K."/>
            <person name="Fujimori K."/>
            <person name="Tanai H."/>
            <person name="Kimata M."/>
            <person name="Watanabe M."/>
            <person name="Hiraoka S."/>
            <person name="Chiba Y."/>
            <person name="Ishida S."/>
            <person name="Ono Y."/>
            <person name="Takiguchi S."/>
            <person name="Watanabe S."/>
            <person name="Yosida M."/>
            <person name="Hotuta T."/>
            <person name="Kusano J."/>
            <person name="Kanehori K."/>
            <person name="Takahashi-Fujii A."/>
            <person name="Hara H."/>
            <person name="Tanase T.-O."/>
            <person name="Nomura Y."/>
            <person name="Togiya S."/>
            <person name="Komai F."/>
            <person name="Hara R."/>
            <person name="Takeuchi K."/>
            <person name="Arita M."/>
            <person name="Imose N."/>
            <person name="Musashino K."/>
            <person name="Yuuki H."/>
            <person name="Oshima A."/>
            <person name="Sasaki N."/>
            <person name="Aotsuka S."/>
            <person name="Yoshikawa Y."/>
            <person name="Matsunawa H."/>
            <person name="Ichihara T."/>
            <person name="Shiohata N."/>
            <person name="Sano S."/>
            <person name="Moriya S."/>
            <person name="Momiyama H."/>
            <person name="Satoh N."/>
            <person name="Takami S."/>
            <person name="Terashima Y."/>
            <person name="Suzuki O."/>
            <person name="Nakagawa S."/>
            <person name="Senoh A."/>
            <person name="Mizoguchi H."/>
            <person name="Goto Y."/>
            <person name="Shimizu F."/>
            <person name="Wakebe H."/>
            <person name="Hishigaki H."/>
            <person name="Watanabe T."/>
            <person name="Sugiyama A."/>
            <person name="Takemoto M."/>
            <person name="Kawakami B."/>
            <person name="Yamazaki M."/>
            <person name="Watanabe K."/>
            <person name="Kumagai A."/>
            <person name="Itakura S."/>
            <person name="Fukuzumi Y."/>
            <person name="Fujimori Y."/>
            <person name="Komiyama M."/>
            <person name="Tashiro H."/>
            <person name="Tanigami A."/>
            <person name="Fujiwara T."/>
            <person name="Ono T."/>
            <person name="Yamada K."/>
            <person name="Fujii Y."/>
            <person name="Ozaki K."/>
            <person name="Hirao M."/>
            <person name="Ohmori Y."/>
            <person name="Kawabata A."/>
            <person name="Hikiji T."/>
            <person name="Kobatake N."/>
            <person name="Inagaki H."/>
            <person name="Ikema Y."/>
            <person name="Okamoto S."/>
            <person name="Okitani R."/>
            <person name="Kawakami T."/>
            <person name="Noguchi S."/>
            <person name="Itoh T."/>
            <person name="Shigeta K."/>
            <person name="Senba T."/>
            <person name="Matsumura K."/>
            <person name="Nakajima Y."/>
            <person name="Mizuno T."/>
            <person name="Morinaga M."/>
            <person name="Sasaki M."/>
            <person name="Togashi T."/>
            <person name="Oyama M."/>
            <person name="Hata H."/>
            <person name="Watanabe M."/>
            <person name="Komatsu T."/>
            <person name="Mizushima-Sugano J."/>
            <person name="Satoh T."/>
            <person name="Shirai Y."/>
            <person name="Takahashi Y."/>
            <person name="Nakagawa K."/>
            <person name="Okumura K."/>
            <person name="Nagase T."/>
            <person name="Nomura N."/>
            <person name="Kikuchi H."/>
            <person name="Masuho Y."/>
            <person name="Yamashita R."/>
            <person name="Nakai K."/>
            <person name="Yada T."/>
            <person name="Nakamura Y."/>
            <person name="Ohara O."/>
            <person name="Isogai T."/>
            <person name="Sugano S."/>
        </authorList>
    </citation>
    <scope>NUCLEOTIDE SEQUENCE [LARGE SCALE MRNA] OF 1248-1943 (ISOFORM 3)</scope>
    <source>
        <tissue evidence="17">Mammary gland</tissue>
    </source>
</reference>
<reference key="9">
    <citation type="journal article" date="2005" name="Mol. Cell. Proteomics">
        <title>Time-resolved mass spectrometry of tyrosine phosphorylation sites in the epidermal growth factor receptor signaling network reveals dynamic modules.</title>
        <authorList>
            <person name="Zhang Y."/>
            <person name="Wolf-Yadlin A."/>
            <person name="Ross P.L."/>
            <person name="Pappin D.J."/>
            <person name="Rush J."/>
            <person name="Lauffenburger D.A."/>
            <person name="White F.M."/>
        </authorList>
    </citation>
    <scope>PHOSPHORYLATION [LARGE SCALE ANALYSIS] AT TYR-393</scope>
    <scope>IDENTIFICATION BY MASS SPECTROMETRY [LARGE SCALE ANALYSIS]</scope>
    <source>
        <tissue>Mammary epithelium</tissue>
    </source>
</reference>
<reference key="10">
    <citation type="journal article" date="2008" name="Proc. Natl. Acad. Sci. U.S.A.">
        <title>A quantitative atlas of mitotic phosphorylation.</title>
        <authorList>
            <person name="Dephoure N."/>
            <person name="Zhou C."/>
            <person name="Villen J."/>
            <person name="Beausoleil S.A."/>
            <person name="Bakalarski C.E."/>
            <person name="Elledge S.J."/>
            <person name="Gygi S.P."/>
        </authorList>
    </citation>
    <scope>IDENTIFICATION BY MASS SPECTROMETRY [LARGE SCALE ANALYSIS]</scope>
    <source>
        <tissue>Cervix carcinoma</tissue>
    </source>
</reference>
<reference key="11">
    <citation type="journal article" date="2013" name="J. Proteome Res.">
        <title>Toward a comprehensive characterization of a human cancer cell phosphoproteome.</title>
        <authorList>
            <person name="Zhou H."/>
            <person name="Di Palma S."/>
            <person name="Preisinger C."/>
            <person name="Peng M."/>
            <person name="Polat A.N."/>
            <person name="Heck A.J."/>
            <person name="Mohammed S."/>
        </authorList>
    </citation>
    <scope>PHOSPHORYLATION [LARGE SCALE ANALYSIS] AT SER-361</scope>
    <scope>IDENTIFICATION BY MASS SPECTROMETRY [LARGE SCALE ANALYSIS]</scope>
    <source>
        <tissue>Cervix carcinoma</tissue>
    </source>
</reference>
<reference key="12">
    <citation type="journal article" date="2014" name="J. Proteomics">
        <title>An enzyme assisted RP-RPLC approach for in-depth analysis of human liver phosphoproteome.</title>
        <authorList>
            <person name="Bian Y."/>
            <person name="Song C."/>
            <person name="Cheng K."/>
            <person name="Dong M."/>
            <person name="Wang F."/>
            <person name="Huang J."/>
            <person name="Sun D."/>
            <person name="Wang L."/>
            <person name="Ye M."/>
            <person name="Zou H."/>
        </authorList>
    </citation>
    <scope>PHOSPHORYLATION [LARGE SCALE ANALYSIS] AT THR-470; SER-526; SER-1044 AND SER-1739</scope>
    <scope>IDENTIFICATION BY MASS SPECTROMETRY [LARGE SCALE ANALYSIS]</scope>
    <source>
        <tissue>Liver</tissue>
    </source>
</reference>
<reference key="13">
    <citation type="journal article" date="2015" name="Cell">
        <title>A Dynamic Protein Interaction Landscape of the Human Centrosome-Cilium Interface.</title>
        <authorList>
            <person name="Gupta G.D."/>
            <person name="Coyaud E."/>
            <person name="Goncalves J."/>
            <person name="Mojarad B.A."/>
            <person name="Liu Y."/>
            <person name="Wu Q."/>
            <person name="Gheiratmand L."/>
            <person name="Comartin D."/>
            <person name="Tkach J.M."/>
            <person name="Cheung S.W."/>
            <person name="Bashkurov M."/>
            <person name="Hasegan M."/>
            <person name="Knight J.D."/>
            <person name="Lin Z.Y."/>
            <person name="Schueler M."/>
            <person name="Hildebrandt F."/>
            <person name="Moffat J."/>
            <person name="Gingras A.C."/>
            <person name="Raught B."/>
            <person name="Pelletier L."/>
        </authorList>
    </citation>
    <scope>SUBCELLULAR LOCATION</scope>
</reference>
<reference key="14">
    <citation type="journal article" date="2020" name="Hum. Mol. Genet.">
        <title>Heterozygous loss of WBP11 function causes multiple congenital defects in humans and mice.</title>
        <authorList>
            <person name="Martin E.M.M.A."/>
            <person name="Enriquez A."/>
            <person name="Sparrow D.B."/>
            <person name="Humphreys D.T."/>
            <person name="McInerney-Leo A.M."/>
            <person name="Leo P.J."/>
            <person name="Duncan E.L."/>
            <person name="Iyer K.R."/>
            <person name="Greasby J.A."/>
            <person name="Ip E."/>
            <person name="Giannoulatou E."/>
            <person name="Sheng D."/>
            <person name="Wohler E."/>
            <person name="Dimartino C."/>
            <person name="Amiel J."/>
            <person name="Capri Y."/>
            <person name="Lehalle D."/>
            <person name="Mory A."/>
            <person name="Wilnai Y."/>
            <person name="Lebenthal Y."/>
            <person name="Gharavi A.G."/>
            <person name="Krzemien G.G."/>
            <person name="Miklaszewska M."/>
            <person name="Steiner R.D."/>
            <person name="Raggio C."/>
            <person name="Blank R."/>
            <person name="Baris Feldman H."/>
            <person name="Milo Rasouly H."/>
            <person name="Sobreira N.L.M."/>
            <person name="Jobling R."/>
            <person name="Gordon C.T."/>
            <person name="Giampietro P.F."/>
            <person name="Dunwoodie S.L."/>
            <person name="Chapman G."/>
        </authorList>
    </citation>
    <scope>VARIANT 1407-LYS--SER-1943 DEL</scope>
</reference>
<comment type="function">
    <text evidence="1">Required for normal development of intervertebral disks.</text>
</comment>
<comment type="subunit">
    <text evidence="1">Interacts with CPNE4 (via VWFA domain).</text>
</comment>
<comment type="interaction">
    <interactant intactId="EBI-10188326">
        <id>Q5T5P2-6</id>
    </interactant>
    <interactant intactId="EBI-11743294">
        <id>Q8IZP0-5</id>
        <label>ABI1</label>
    </interactant>
    <organismsDiffer>false</organismsDiffer>
    <experiments>3</experiments>
</comment>
<comment type="interaction">
    <interactant intactId="EBI-10188326">
        <id>Q5T5P2-6</id>
    </interactant>
    <interactant intactId="EBI-743598">
        <id>Q9NYB9</id>
        <label>ABI2</label>
    </interactant>
    <organismsDiffer>false</organismsDiffer>
    <experiments>3</experiments>
</comment>
<comment type="interaction">
    <interactant intactId="EBI-10188326">
        <id>Q5T5P2-6</id>
    </interactant>
    <interactant intactId="EBI-11096309">
        <id>Q9NYB9-2</id>
        <label>ABI2</label>
    </interactant>
    <organismsDiffer>false</organismsDiffer>
    <experiments>3</experiments>
</comment>
<comment type="interaction">
    <interactant intactId="EBI-10188326">
        <id>Q5T5P2-6</id>
    </interactant>
    <interactant intactId="EBI-2878075">
        <id>Q9BT30</id>
        <label>ALKBH7</label>
    </interactant>
    <organismsDiffer>false</organismsDiffer>
    <experiments>3</experiments>
</comment>
<comment type="interaction">
    <interactant intactId="EBI-10188326">
        <id>Q5T5P2-6</id>
    </interactant>
    <interactant intactId="EBI-742102">
        <id>Q8IYI6</id>
        <label>EXOC8</label>
    </interactant>
    <organismsDiffer>false</organismsDiffer>
    <experiments>3</experiments>
</comment>
<comment type="interaction">
    <interactant intactId="EBI-10188326">
        <id>Q5T5P2-6</id>
    </interactant>
    <interactant intactId="EBI-701903">
        <id>Q14192</id>
        <label>FHL2</label>
    </interactant>
    <organismsDiffer>false</organismsDiffer>
    <experiments>3</experiments>
</comment>
<comment type="interaction">
    <interactant intactId="EBI-10188326">
        <id>Q5T5P2-6</id>
    </interactant>
    <interactant intactId="EBI-744302">
        <id>P14136</id>
        <label>GFAP</label>
    </interactant>
    <organismsDiffer>false</organismsDiffer>
    <experiments>3</experiments>
</comment>
<comment type="interaction">
    <interactant intactId="EBI-10188326">
        <id>Q5T5P2-6</id>
    </interactant>
    <interactant intactId="EBI-618309">
        <id>Q08379</id>
        <label>GOLGA2</label>
    </interactant>
    <organismsDiffer>false</organismsDiffer>
    <experiments>6</experiments>
</comment>
<comment type="interaction">
    <interactant intactId="EBI-10188326">
        <id>Q5T5P2-6</id>
    </interactant>
    <interactant intactId="EBI-748664">
        <id>O75506</id>
        <label>HSBP1</label>
    </interactant>
    <organismsDiffer>false</organismsDiffer>
    <experiments>5</experiments>
</comment>
<comment type="interaction">
    <interactant intactId="EBI-10188326">
        <id>Q5T5P2-6</id>
    </interactant>
    <interactant intactId="EBI-466029">
        <id>P42858</id>
        <label>HTT</label>
    </interactant>
    <organismsDiffer>false</organismsDiffer>
    <experiments>3</experiments>
</comment>
<comment type="interaction">
    <interactant intactId="EBI-10188326">
        <id>Q5T5P2-6</id>
    </interactant>
    <interactant intactId="EBI-6509505">
        <id>Q0VD86</id>
        <label>INCA1</label>
    </interactant>
    <organismsDiffer>false</organismsDiffer>
    <experiments>3</experiments>
</comment>
<comment type="interaction">
    <interactant intactId="EBI-10188326">
        <id>Q5T5P2-6</id>
    </interactant>
    <interactant intactId="EBI-1055254">
        <id>Q8WXH2</id>
        <label>JPH3</label>
    </interactant>
    <organismsDiffer>false</organismsDiffer>
    <experiments>3</experiments>
</comment>
<comment type="interaction">
    <interactant intactId="EBI-10188326">
        <id>Q5T5P2-6</id>
    </interactant>
    <interactant intactId="EBI-739566">
        <id>P19012</id>
        <label>KRT15</label>
    </interactant>
    <organismsDiffer>false</organismsDiffer>
    <experiments>3</experiments>
</comment>
<comment type="interaction">
    <interactant intactId="EBI-10188326">
        <id>Q5T5P2-6</id>
    </interactant>
    <interactant intactId="EBI-3044087">
        <id>Q7Z3Y8</id>
        <label>KRT27</label>
    </interactant>
    <organismsDiffer>false</organismsDiffer>
    <experiments>3</experiments>
</comment>
<comment type="interaction">
    <interactant intactId="EBI-10188326">
        <id>Q5T5P2-6</id>
    </interactant>
    <interactant intactId="EBI-948001">
        <id>Q15323</id>
        <label>KRT31</label>
    </interactant>
    <organismsDiffer>false</organismsDiffer>
    <experiments>3</experiments>
</comment>
<comment type="interaction">
    <interactant intactId="EBI-10188326">
        <id>Q5T5P2-6</id>
    </interactant>
    <interactant intactId="EBI-752074">
        <id>P41219</id>
        <label>PRPH</label>
    </interactant>
    <organismsDiffer>false</organismsDiffer>
    <experiments>3</experiments>
</comment>
<comment type="interaction">
    <interactant intactId="EBI-10188326">
        <id>Q5T5P2-6</id>
    </interactant>
    <interactant intactId="EBI-1383632">
        <id>Q13882</id>
        <label>PTK6</label>
    </interactant>
    <organismsDiffer>false</organismsDiffer>
    <experiments>3</experiments>
</comment>
<comment type="interaction">
    <interactant intactId="EBI-10188326">
        <id>Q5T5P2-6</id>
    </interactant>
    <interactant intactId="EBI-726876">
        <id>Q6NUQ1</id>
        <label>RINT1</label>
    </interactant>
    <organismsDiffer>false</organismsDiffer>
    <experiments>3</experiments>
</comment>
<comment type="interaction">
    <interactant intactId="EBI-10188326">
        <id>Q5T5P2-6</id>
    </interactant>
    <interactant intactId="EBI-747107">
        <id>Q8IUQ4</id>
        <label>SIAH1</label>
    </interactant>
    <organismsDiffer>false</organismsDiffer>
    <experiments>3</experiments>
</comment>
<comment type="interaction">
    <interactant intactId="EBI-10188326">
        <id>Q5T5P2-6</id>
    </interactant>
    <interactant intactId="EBI-359224">
        <id>Q13077</id>
        <label>TRAF1</label>
    </interactant>
    <organismsDiffer>false</organismsDiffer>
    <experiments>3</experiments>
</comment>
<comment type="interaction">
    <interactant intactId="EBI-10188326">
        <id>Q5T5P2-6</id>
    </interactant>
    <interactant intactId="EBI-355744">
        <id>Q12933</id>
        <label>TRAF2</label>
    </interactant>
    <organismsDiffer>false</organismsDiffer>
    <experiments>3</experiments>
</comment>
<comment type="interaction">
    <interactant intactId="EBI-10188326">
        <id>Q5T5P2-6</id>
    </interactant>
    <interactant intactId="EBI-2799833">
        <id>Q8N1B4</id>
        <label>VPS52</label>
    </interactant>
    <organismsDiffer>false</organismsDiffer>
    <experiments>3</experiments>
</comment>
<comment type="subcellular location">
    <subcellularLocation>
        <location evidence="6">Cytoplasm</location>
        <location evidence="6">Cytoskeleton</location>
        <location evidence="6">Microtubule organizing center</location>
        <location evidence="6">Centrosome</location>
    </subcellularLocation>
    <subcellularLocation>
        <location evidence="1">Cytoplasm</location>
    </subcellularLocation>
</comment>
<comment type="alternative products">
    <event type="alternative splicing"/>
    <isoform>
        <id>Q5T5P2-1</id>
        <name>1</name>
        <sequence type="displayed"/>
    </isoform>
    <isoform>
        <id>Q5T5P2-2</id>
        <name evidence="4">2</name>
        <sequence type="described" ref="VSP_052429"/>
    </isoform>
    <isoform>
        <id>Q5T5P2-3</id>
        <name>3</name>
        <sequence type="described" ref="VSP_052427 VSP_052428 VSP_052431 VSP_052432"/>
    </isoform>
    <isoform>
        <id>Q5T5P2-4</id>
        <name evidence="5">4</name>
        <sequence type="described" ref="VSP_052427 VSP_052428 VSP_052429 VSP_052431 VSP_052432"/>
    </isoform>
    <isoform>
        <id>Q5T5P2-7</id>
        <name>5</name>
        <sequence type="described" ref="VSP_052428 VSP_030353"/>
    </isoform>
    <isoform>
        <id>Q5T5P2-6</id>
        <name evidence="5">6</name>
        <sequence type="described" ref="VSP_052427 VSP_052428 VSP_052430 VSP_052431 VSP_052432"/>
    </isoform>
    <isoform>
        <id>Q5T5P2-8</id>
        <name>7</name>
        <sequence type="described" ref="VSP_052427 VSP_052428 VSP_030353 VSP_052431 VSP_052432"/>
    </isoform>
    <isoform>
        <id>Q5T5P2-9</id>
        <name>9</name>
        <sequence type="described" ref="VSP_054107 VSP_052429"/>
    </isoform>
    <isoform>
        <id>Q5T5P2-10</id>
        <name>10</name>
        <sequence type="described" ref="VSP_052428 VSP_054874 VSP_052430"/>
    </isoform>
</comment>
<comment type="sequence caution" evidence="13">
    <conflict type="erroneous initiation">
        <sequence resource="EMBL-CDS" id="AAH18764"/>
    </conflict>
</comment>
<comment type="sequence caution" evidence="13">
    <conflict type="frameshift">
        <sequence resource="EMBL" id="AL833280"/>
    </conflict>
</comment>
<comment type="sequence caution" evidence="13">
    <conflict type="erroneous initiation">
        <sequence resource="EMBL-CDS" id="BAC86241"/>
    </conflict>
</comment>
<comment type="sequence caution" evidence="13">
    <conflict type="erroneous initiation">
        <sequence resource="EMBL-CDS" id="BAF63529"/>
    </conflict>
</comment>
<comment type="sequence caution" evidence="13">
    <conflict type="erroneous termination">
        <sequence resource="EMBL-CDS" id="CAE45879"/>
    </conflict>
    <text>Truncated C-terminus.</text>
</comment>
<protein>
    <recommendedName>
        <fullName>Sickle tail protein homolog</fullName>
    </recommendedName>
</protein>
<proteinExistence type="evidence at protein level"/>
<gene>
    <name type="primary">KIAA1217</name>
    <name type="synonym">SKT</name>
</gene>